<organism>
    <name type="scientific">Arabidopsis thaliana</name>
    <name type="common">Mouse-ear cress</name>
    <dbReference type="NCBI Taxonomy" id="3702"/>
    <lineage>
        <taxon>Eukaryota</taxon>
        <taxon>Viridiplantae</taxon>
        <taxon>Streptophyta</taxon>
        <taxon>Embryophyta</taxon>
        <taxon>Tracheophyta</taxon>
        <taxon>Spermatophyta</taxon>
        <taxon>Magnoliopsida</taxon>
        <taxon>eudicotyledons</taxon>
        <taxon>Gunneridae</taxon>
        <taxon>Pentapetalae</taxon>
        <taxon>rosids</taxon>
        <taxon>malvids</taxon>
        <taxon>Brassicales</taxon>
        <taxon>Brassicaceae</taxon>
        <taxon>Camelineae</taxon>
        <taxon>Arabidopsis</taxon>
    </lineage>
</organism>
<sequence length="801" mass="89617">MSSLSQSPPPPEMDIQPPALVNDDPSTYSSALWDWGDLLDFAADERLLVDQIHFPPVLSPPLPPLIPTQTPAESELDPSPEESGSGSDRVRKRDPRLICSNFIEGMLPCSCPELDQKLEDAELPKKKRVRGGSGVARCQVPDCEADISELKGYHKRHRVCLRCATASFVVLDGENKRYCQQCGKFHLLPDFDEGKRSCRRKLERHNNRRKRKPVDKGGVAAEQQQVLSQNDNSVIDVEDGKDITCSSDQRAEEEPSLIFEDRHITTQGSVPFTRSINADNFVSVTGSGEAQPDEGMNDTKFERSPSNGDNKSAYSTVCPTGRISFKLYDWNPAEFPRRLRHQIFQWLANMPVELEGYIRPGCTILTVFIAMPEIMWAKLSKDPVAYLDEFILKPGKMLFGRGSMTVYLNNMIFRLIKGGTTLKRVDVKLESPKLQFVYPTCFEAGKPIELVVCGQNLLQPKCRFLVSFSGKYLPHNYSVVPAPDQDGKRSCNNKFYKINIVNSDPSLFGPAFVEVENESGLSNFIPLIIGDAAVCSEMKLIEQKFNATLFPEGQEVTACSSLTCCCRDFGERQSTFSGLLLDIAWSVKVPSAERTEQPVNRCQIKRYNRVLNYLIQNNSASILGNVLHNLETLVKKMEPDSLVHCTCDCDVRLLHENMDLASDIHRKHQSPIESKVNPPSSGCCCVSSQKDIPSRILNFNKDPEAGLDCKERIQADCSPDSGGKETDPLLNKEVVMNVNDIGDWPRKSCIKTHSALAFRSRQTMFLIATFAVCFAVCAVLYHPNKVTQLAVAIRMRLVHKI</sequence>
<gene>
    <name type="primary">SPL7</name>
    <name type="ordered locus">At5g18830</name>
    <name type="ORF">F17K4.80</name>
</gene>
<keyword id="KW-0002">3D-structure</keyword>
<keyword id="KW-0010">Activator</keyword>
<keyword id="KW-0025">Alternative splicing</keyword>
<keyword id="KW-0238">DNA-binding</keyword>
<keyword id="KW-0479">Metal-binding</keyword>
<keyword id="KW-0539">Nucleus</keyword>
<keyword id="KW-1185">Reference proteome</keyword>
<keyword id="KW-0346">Stress response</keyword>
<keyword id="KW-0804">Transcription</keyword>
<keyword id="KW-0805">Transcription regulation</keyword>
<keyword id="KW-0862">Zinc</keyword>
<keyword id="KW-0863">Zinc-finger</keyword>
<comment type="function">
    <text evidence="6 7 10 11 12">Transcription factor that participates in reprogramming global gene expression during copper deficiency in order to improve the metal uptake and prioritize its distribution to copper proteins of major importance (Probable). Binds directly to 5'-GTAC-3' motifs in the microRNA (miRNA) promoter of the stress-responsive miRNAs miR398b and miR398c to activate their transcription. During copper deficiency, activates the copper transporters COPT1 and COPT2, and the copper chaperone CCH, directly or indirectly via miRNAs. Required for the expression of the miRNAs miR397, miR408 and miR857 (PubMed:19122104). Acts coordinately with HY5 to regulate miR408 and its target genes in response to changes in light and copper conditions (PubMed:25516599). Activates miR857 and its target genes in response to low copper conditions (PubMed:26511915). Involved in cadmium stress response by regulating miR397a, miR398b, miR398c and miR857 (PubMed:27352843). Required for iron homeostasis during copper deficiency (PubMed:22374396).</text>
</comment>
<comment type="cofactor">
    <cofactor evidence="5">
        <name>Zn(2+)</name>
        <dbReference type="ChEBI" id="CHEBI:29105"/>
    </cofactor>
    <text evidence="5">Binds 2 Zn(2+) ions per subunit.</text>
</comment>
<comment type="subunit">
    <text evidence="8 9 10">Homodimer (PubMed:25207797). Interacts with KIN17 (PubMed:24335506). Interacts with HY5 (PubMed:25516599).</text>
</comment>
<comment type="subcellular location">
    <subcellularLocation>
        <location evidence="8">Nucleus speckle</location>
    </subcellularLocation>
    <text evidence="8">Nuclear localization with a speckled distribution pattern.</text>
</comment>
<comment type="alternative products">
    <event type="alternative splicing"/>
    <isoform>
        <id>Q8S9G8-1</id>
        <name>1</name>
        <sequence type="displayed"/>
    </isoform>
    <isoform>
        <id>Q8S9G8-2</id>
        <name>2</name>
        <sequence type="described" ref="VSP_013984"/>
    </isoform>
</comment>
<comment type="tissue specificity">
    <text evidence="8">Expressed in roots rosette leaves, cauline leaves, stems, flowers and siliques.</text>
</comment>
<comment type="developmental stage">
    <text evidence="4">Expressed constitutively during plant development.</text>
</comment>
<comment type="domain">
    <text evidence="14">The SBP-type zinc finger is required for the binding to DNA.</text>
</comment>
<comment type="disruption phenotype">
    <text evidence="8">Retarded growth and hypersensitivity to copper deprivation.</text>
</comment>
<comment type="miscellaneous">
    <molecule>Isoform 2</molecule>
    <text evidence="14">May be due to a competing donor splice site.</text>
</comment>
<comment type="sequence caution" evidence="14">
    <conflict type="erroneous initiation">
        <sequence resource="EMBL-CDS" id="AAL77751"/>
    </conflict>
    <text>Truncated N-terminus.</text>
</comment>
<feature type="chain" id="PRO_0000132728" description="Squamosa promoter-binding-like protein 7">
    <location>
        <begin position="1"/>
        <end position="801"/>
    </location>
</feature>
<feature type="zinc finger region" description="SBP-type; atypical" evidence="2">
    <location>
        <begin position="135"/>
        <end position="212"/>
    </location>
</feature>
<feature type="region of interest" description="Disordered" evidence="3">
    <location>
        <begin position="1"/>
        <end position="23"/>
    </location>
</feature>
<feature type="region of interest" description="Disordered" evidence="3">
    <location>
        <begin position="59"/>
        <end position="91"/>
    </location>
</feature>
<feature type="region of interest" description="Disordered" evidence="3">
    <location>
        <begin position="203"/>
        <end position="258"/>
    </location>
</feature>
<feature type="region of interest" description="Disordered" evidence="3">
    <location>
        <begin position="286"/>
        <end position="313"/>
    </location>
</feature>
<feature type="short sequence motif" description="Bipartite nuclear localization signal" evidence="1">
    <location>
        <begin position="195"/>
        <end position="211"/>
    </location>
</feature>
<feature type="compositionally biased region" description="Basic residues" evidence="3">
    <location>
        <begin position="203"/>
        <end position="213"/>
    </location>
</feature>
<feature type="compositionally biased region" description="Polar residues" evidence="3">
    <location>
        <begin position="222"/>
        <end position="233"/>
    </location>
</feature>
<feature type="compositionally biased region" description="Basic and acidic residues" evidence="3">
    <location>
        <begin position="249"/>
        <end position="258"/>
    </location>
</feature>
<feature type="compositionally biased region" description="Polar residues" evidence="3">
    <location>
        <begin position="304"/>
        <end position="313"/>
    </location>
</feature>
<feature type="binding site" evidence="2 5 15">
    <location>
        <position position="138"/>
    </location>
    <ligand>
        <name>Zn(2+)</name>
        <dbReference type="ChEBI" id="CHEBI:29105"/>
        <label>1</label>
    </ligand>
</feature>
<feature type="binding site" evidence="2 5 15">
    <location>
        <position position="143"/>
    </location>
    <ligand>
        <name>Zn(2+)</name>
        <dbReference type="ChEBI" id="CHEBI:29105"/>
        <label>1</label>
    </ligand>
</feature>
<feature type="binding site" evidence="2 5 15">
    <location>
        <position position="160"/>
    </location>
    <ligand>
        <name>Zn(2+)</name>
        <dbReference type="ChEBI" id="CHEBI:29105"/>
        <label>1</label>
    </ligand>
</feature>
<feature type="binding site" evidence="2 5 15">
    <location>
        <position position="163"/>
    </location>
    <ligand>
        <name>Zn(2+)</name>
        <dbReference type="ChEBI" id="CHEBI:29105"/>
        <label>1</label>
    </ligand>
</feature>
<feature type="binding site" evidence="2 5 15">
    <location>
        <position position="179"/>
    </location>
    <ligand>
        <name>Zn(2+)</name>
        <dbReference type="ChEBI" id="CHEBI:29105"/>
        <label>2</label>
    </ligand>
</feature>
<feature type="binding site" evidence="2 5 15">
    <location>
        <position position="182"/>
    </location>
    <ligand>
        <name>Zn(2+)</name>
        <dbReference type="ChEBI" id="CHEBI:29105"/>
        <label>2</label>
    </ligand>
</feature>
<feature type="binding site" evidence="2 5 15">
    <location>
        <position position="186"/>
    </location>
    <ligand>
        <name>Zn(2+)</name>
        <dbReference type="ChEBI" id="CHEBI:29105"/>
        <label>2</label>
    </ligand>
</feature>
<feature type="binding site" evidence="2 5 15">
    <location>
        <position position="198"/>
    </location>
    <ligand>
        <name>Zn(2+)</name>
        <dbReference type="ChEBI" id="CHEBI:29105"/>
        <label>2</label>
    </ligand>
</feature>
<feature type="splice variant" id="VSP_013984" description="In isoform 2." evidence="13">
    <location>
        <begin position="675"/>
        <end position="700"/>
    </location>
</feature>
<feature type="sequence conflict" description="In Ref. 1; CAB56573." evidence="14" ref="1">
    <original>T</original>
    <variation>N</variation>
    <location>
        <position position="165"/>
    </location>
</feature>
<feature type="strand" evidence="16">
    <location>
        <begin position="152"/>
        <end position="154"/>
    </location>
</feature>
<feature type="helix" evidence="16">
    <location>
        <begin position="155"/>
        <end position="157"/>
    </location>
</feature>
<feature type="helix" evidence="16">
    <location>
        <begin position="161"/>
        <end position="166"/>
    </location>
</feature>
<feature type="strand" evidence="16">
    <location>
        <begin position="167"/>
        <end position="171"/>
    </location>
</feature>
<feature type="strand" evidence="16">
    <location>
        <begin position="174"/>
        <end position="178"/>
    </location>
</feature>
<feature type="turn" evidence="16">
    <location>
        <begin position="180"/>
        <end position="182"/>
    </location>
</feature>
<feature type="strand" evidence="16">
    <location>
        <begin position="183"/>
        <end position="187"/>
    </location>
</feature>
<feature type="helix" evidence="16">
    <location>
        <begin position="188"/>
        <end position="190"/>
    </location>
</feature>
<feature type="strand" evidence="16">
    <location>
        <begin position="197"/>
        <end position="201"/>
    </location>
</feature>
<feature type="strand" evidence="16">
    <location>
        <begin position="205"/>
        <end position="207"/>
    </location>
</feature>
<protein>
    <recommendedName>
        <fullName>Squamosa promoter-binding-like protein 7</fullName>
    </recommendedName>
</protein>
<accession>Q8S9G8</accession>
<accession>Q8VZV0</accession>
<accession>Q9S723</accession>
<accession>Q9SMY1</accession>
<proteinExistence type="evidence at protein level"/>
<dbReference type="EMBL" id="AJ011611">
    <property type="protein sequence ID" value="CAB56573.1"/>
    <property type="molecule type" value="mRNA"/>
</dbReference>
<dbReference type="EMBL" id="AJ011612">
    <property type="protein sequence ID" value="CAB56574.1"/>
    <property type="molecule type" value="mRNA"/>
</dbReference>
<dbReference type="EMBL" id="AJ011613">
    <property type="protein sequence ID" value="CAB56575.1"/>
    <property type="molecule type" value="Genomic_DNA"/>
</dbReference>
<dbReference type="EMBL" id="AC068655">
    <property type="status" value="NOT_ANNOTATED_CDS"/>
    <property type="molecule type" value="Genomic_DNA"/>
</dbReference>
<dbReference type="EMBL" id="CP002688">
    <property type="protein sequence ID" value="AED92617.1"/>
    <property type="molecule type" value="Genomic_DNA"/>
</dbReference>
<dbReference type="EMBL" id="CP002688">
    <property type="protein sequence ID" value="AED92618.1"/>
    <property type="molecule type" value="Genomic_DNA"/>
</dbReference>
<dbReference type="EMBL" id="AF367355">
    <property type="protein sequence ID" value="AAK32941.1"/>
    <property type="molecule type" value="mRNA"/>
</dbReference>
<dbReference type="EMBL" id="AY063815">
    <property type="protein sequence ID" value="AAL36171.1"/>
    <property type="molecule type" value="mRNA"/>
</dbReference>
<dbReference type="EMBL" id="AY078050">
    <property type="protein sequence ID" value="AAL77751.1"/>
    <property type="status" value="ALT_INIT"/>
    <property type="molecule type" value="mRNA"/>
</dbReference>
<dbReference type="PIR" id="T52605">
    <property type="entry name" value="T52605"/>
</dbReference>
<dbReference type="PIR" id="T52606">
    <property type="entry name" value="T52606"/>
</dbReference>
<dbReference type="RefSeq" id="NP_197384.1">
    <molecule id="Q8S9G8-1"/>
    <property type="nucleotide sequence ID" value="NM_121888.3"/>
</dbReference>
<dbReference type="RefSeq" id="NP_850850.1">
    <molecule id="Q8S9G8-2"/>
    <property type="nucleotide sequence ID" value="NM_180519.1"/>
</dbReference>
<dbReference type="PDB" id="1UL5">
    <property type="method" value="NMR"/>
    <property type="chains" value="A=135-220"/>
</dbReference>
<dbReference type="PDBsum" id="1UL5"/>
<dbReference type="SMR" id="Q8S9G8"/>
<dbReference type="BioGRID" id="17277">
    <property type="interactions" value="3"/>
</dbReference>
<dbReference type="FunCoup" id="Q8S9G8">
    <property type="interactions" value="1863"/>
</dbReference>
<dbReference type="IntAct" id="Q8S9G8">
    <property type="interactions" value="1"/>
</dbReference>
<dbReference type="STRING" id="3702.Q8S9G8"/>
<dbReference type="PaxDb" id="3702-AT5G18830.3"/>
<dbReference type="ProteomicsDB" id="228397">
    <molecule id="Q8S9G8-1"/>
</dbReference>
<dbReference type="EnsemblPlants" id="AT5G18830.1">
    <molecule id="Q8S9G8-1"/>
    <property type="protein sequence ID" value="AT5G18830.1"/>
    <property type="gene ID" value="AT5G18830"/>
</dbReference>
<dbReference type="EnsemblPlants" id="AT5G18830.2">
    <molecule id="Q8S9G8-2"/>
    <property type="protein sequence ID" value="AT5G18830.2"/>
    <property type="gene ID" value="AT5G18830"/>
</dbReference>
<dbReference type="GeneID" id="832001"/>
<dbReference type="Gramene" id="AT5G18830.1">
    <molecule id="Q8S9G8-1"/>
    <property type="protein sequence ID" value="AT5G18830.1"/>
    <property type="gene ID" value="AT5G18830"/>
</dbReference>
<dbReference type="Gramene" id="AT5G18830.2">
    <molecule id="Q8S9G8-2"/>
    <property type="protein sequence ID" value="AT5G18830.2"/>
    <property type="gene ID" value="AT5G18830"/>
</dbReference>
<dbReference type="KEGG" id="ath:AT5G18830"/>
<dbReference type="Araport" id="AT5G18830"/>
<dbReference type="TAIR" id="AT5G18830">
    <property type="gene designation" value="SPL7"/>
</dbReference>
<dbReference type="eggNOG" id="ENOG502QUTN">
    <property type="taxonomic scope" value="Eukaryota"/>
</dbReference>
<dbReference type="InParanoid" id="Q8S9G8"/>
<dbReference type="OMA" id="WQSEELS"/>
<dbReference type="PhylomeDB" id="Q8S9G8"/>
<dbReference type="EvolutionaryTrace" id="Q8S9G8"/>
<dbReference type="PRO" id="PR:Q8S9G8"/>
<dbReference type="Proteomes" id="UP000006548">
    <property type="component" value="Chromosome 5"/>
</dbReference>
<dbReference type="ExpressionAtlas" id="Q8S9G8">
    <property type="expression patterns" value="baseline and differential"/>
</dbReference>
<dbReference type="GO" id="GO:0016607">
    <property type="term" value="C:nuclear speck"/>
    <property type="evidence" value="ECO:0000314"/>
    <property type="project" value="UniProtKB"/>
</dbReference>
<dbReference type="GO" id="GO:0003677">
    <property type="term" value="F:DNA binding"/>
    <property type="evidence" value="ECO:0007669"/>
    <property type="project" value="UniProtKB-KW"/>
</dbReference>
<dbReference type="GO" id="GO:0042803">
    <property type="term" value="F:protein homodimerization activity"/>
    <property type="evidence" value="ECO:0000314"/>
    <property type="project" value="UniProtKB"/>
</dbReference>
<dbReference type="GO" id="GO:0008270">
    <property type="term" value="F:zinc ion binding"/>
    <property type="evidence" value="ECO:0007669"/>
    <property type="project" value="UniProtKB-KW"/>
</dbReference>
<dbReference type="GO" id="GO:0035874">
    <property type="term" value="P:cellular response to copper ion starvation"/>
    <property type="evidence" value="ECO:0000315"/>
    <property type="project" value="UniProtKB"/>
</dbReference>
<dbReference type="GO" id="GO:0048638">
    <property type="term" value="P:regulation of developmental growth"/>
    <property type="evidence" value="ECO:0000315"/>
    <property type="project" value="UniProtKB"/>
</dbReference>
<dbReference type="GO" id="GO:0006355">
    <property type="term" value="P:regulation of DNA-templated transcription"/>
    <property type="evidence" value="ECO:0000314"/>
    <property type="project" value="UniProtKB"/>
</dbReference>
<dbReference type="Gene3D" id="4.10.1100.10">
    <property type="entry name" value="Transcription factor, SBP-box domain"/>
    <property type="match status" value="1"/>
</dbReference>
<dbReference type="InterPro" id="IPR044817">
    <property type="entry name" value="SBP-like"/>
</dbReference>
<dbReference type="InterPro" id="IPR004333">
    <property type="entry name" value="SBP_dom"/>
</dbReference>
<dbReference type="InterPro" id="IPR036893">
    <property type="entry name" value="SBP_sf"/>
</dbReference>
<dbReference type="PANTHER" id="PTHR31251">
    <property type="entry name" value="SQUAMOSA PROMOTER-BINDING-LIKE PROTEIN 4"/>
    <property type="match status" value="1"/>
</dbReference>
<dbReference type="PANTHER" id="PTHR31251:SF108">
    <property type="entry name" value="SQUAMOSA PROMOTER-BINDING-LIKE PROTEIN 7"/>
    <property type="match status" value="1"/>
</dbReference>
<dbReference type="Pfam" id="PF03110">
    <property type="entry name" value="SBP"/>
    <property type="match status" value="1"/>
</dbReference>
<dbReference type="SUPFAM" id="SSF103612">
    <property type="entry name" value="SBT domain"/>
    <property type="match status" value="1"/>
</dbReference>
<dbReference type="PROSITE" id="PS51141">
    <property type="entry name" value="ZF_SBP"/>
    <property type="match status" value="1"/>
</dbReference>
<name>SPL7_ARATH</name>
<evidence type="ECO:0000255" key="1"/>
<evidence type="ECO:0000255" key="2">
    <source>
        <dbReference type="PROSITE-ProRule" id="PRU00470"/>
    </source>
</evidence>
<evidence type="ECO:0000256" key="3">
    <source>
        <dbReference type="SAM" id="MobiDB-lite"/>
    </source>
</evidence>
<evidence type="ECO:0000269" key="4">
    <source>
    </source>
</evidence>
<evidence type="ECO:0000269" key="5">
    <source>
    </source>
</evidence>
<evidence type="ECO:0000269" key="6">
    <source>
    </source>
</evidence>
<evidence type="ECO:0000269" key="7">
    <source>
    </source>
</evidence>
<evidence type="ECO:0000269" key="8">
    <source>
    </source>
</evidence>
<evidence type="ECO:0000269" key="9">
    <source>
    </source>
</evidence>
<evidence type="ECO:0000269" key="10">
    <source>
    </source>
</evidence>
<evidence type="ECO:0000269" key="11">
    <source>
    </source>
</evidence>
<evidence type="ECO:0000269" key="12">
    <source>
    </source>
</evidence>
<evidence type="ECO:0000303" key="13">
    <source>
    </source>
</evidence>
<evidence type="ECO:0000305" key="14"/>
<evidence type="ECO:0007744" key="15">
    <source>
        <dbReference type="PDB" id="1UL5"/>
    </source>
</evidence>
<evidence type="ECO:0007829" key="16">
    <source>
        <dbReference type="PDB" id="1UL5"/>
    </source>
</evidence>
<reference key="1">
    <citation type="journal article" date="1999" name="Gene">
        <title>Molecular characterization of the Arabidopsis SBP-box genes.</title>
        <authorList>
            <person name="Cardon G.H."/>
            <person name="Hoehmann S."/>
            <person name="Klein J."/>
            <person name="Nettesheim K."/>
            <person name="Saedler H."/>
            <person name="Huijser P."/>
        </authorList>
    </citation>
    <scope>NUCLEOTIDE SEQUENCE [GENOMIC DNA / MRNA] (ISOFORM 1)</scope>
    <scope>DEVELOPMENTAL STAGE</scope>
    <source>
        <strain>cv. Columbia</strain>
        <strain>cv. Landsberg erecta</strain>
        <tissue>Flower</tissue>
    </source>
</reference>
<reference key="2">
    <citation type="journal article" date="2000" name="Nature">
        <title>Sequence and analysis of chromosome 5 of the plant Arabidopsis thaliana.</title>
        <authorList>
            <person name="Tabata S."/>
            <person name="Kaneko T."/>
            <person name="Nakamura Y."/>
            <person name="Kotani H."/>
            <person name="Kato T."/>
            <person name="Asamizu E."/>
            <person name="Miyajima N."/>
            <person name="Sasamoto S."/>
            <person name="Kimura T."/>
            <person name="Hosouchi T."/>
            <person name="Kawashima K."/>
            <person name="Kohara M."/>
            <person name="Matsumoto M."/>
            <person name="Matsuno A."/>
            <person name="Muraki A."/>
            <person name="Nakayama S."/>
            <person name="Nakazaki N."/>
            <person name="Naruo K."/>
            <person name="Okumura S."/>
            <person name="Shinpo S."/>
            <person name="Takeuchi C."/>
            <person name="Wada T."/>
            <person name="Watanabe A."/>
            <person name="Yamada M."/>
            <person name="Yasuda M."/>
            <person name="Sato S."/>
            <person name="de la Bastide M."/>
            <person name="Huang E."/>
            <person name="Spiegel L."/>
            <person name="Gnoj L."/>
            <person name="O'Shaughnessy A."/>
            <person name="Preston R."/>
            <person name="Habermann K."/>
            <person name="Murray J."/>
            <person name="Johnson D."/>
            <person name="Rohlfing T."/>
            <person name="Nelson J."/>
            <person name="Stoneking T."/>
            <person name="Pepin K."/>
            <person name="Spieth J."/>
            <person name="Sekhon M."/>
            <person name="Armstrong J."/>
            <person name="Becker M."/>
            <person name="Belter E."/>
            <person name="Cordum H."/>
            <person name="Cordes M."/>
            <person name="Courtney L."/>
            <person name="Courtney W."/>
            <person name="Dante M."/>
            <person name="Du H."/>
            <person name="Edwards J."/>
            <person name="Fryman J."/>
            <person name="Haakensen B."/>
            <person name="Lamar E."/>
            <person name="Latreille P."/>
            <person name="Leonard S."/>
            <person name="Meyer R."/>
            <person name="Mulvaney E."/>
            <person name="Ozersky P."/>
            <person name="Riley A."/>
            <person name="Strowmatt C."/>
            <person name="Wagner-McPherson C."/>
            <person name="Wollam A."/>
            <person name="Yoakum M."/>
            <person name="Bell M."/>
            <person name="Dedhia N."/>
            <person name="Parnell L."/>
            <person name="Shah R."/>
            <person name="Rodriguez M."/>
            <person name="Hoon See L."/>
            <person name="Vil D."/>
            <person name="Baker J."/>
            <person name="Kirchoff K."/>
            <person name="Toth K."/>
            <person name="King L."/>
            <person name="Bahret A."/>
            <person name="Miller B."/>
            <person name="Marra M.A."/>
            <person name="Martienssen R."/>
            <person name="McCombie W.R."/>
            <person name="Wilson R.K."/>
            <person name="Murphy G."/>
            <person name="Bancroft I."/>
            <person name="Volckaert G."/>
            <person name="Wambutt R."/>
            <person name="Duesterhoeft A."/>
            <person name="Stiekema W."/>
            <person name="Pohl T."/>
            <person name="Entian K.-D."/>
            <person name="Terryn N."/>
            <person name="Hartley N."/>
            <person name="Bent E."/>
            <person name="Johnson S."/>
            <person name="Langham S.-A."/>
            <person name="McCullagh B."/>
            <person name="Robben J."/>
            <person name="Grymonprez B."/>
            <person name="Zimmermann W."/>
            <person name="Ramsperger U."/>
            <person name="Wedler H."/>
            <person name="Balke K."/>
            <person name="Wedler E."/>
            <person name="Peters S."/>
            <person name="van Staveren M."/>
            <person name="Dirkse W."/>
            <person name="Mooijman P."/>
            <person name="Klein Lankhorst R."/>
            <person name="Weitzenegger T."/>
            <person name="Bothe G."/>
            <person name="Rose M."/>
            <person name="Hauf J."/>
            <person name="Berneiser S."/>
            <person name="Hempel S."/>
            <person name="Feldpausch M."/>
            <person name="Lamberth S."/>
            <person name="Villarroel R."/>
            <person name="Gielen J."/>
            <person name="Ardiles W."/>
            <person name="Bents O."/>
            <person name="Lemcke K."/>
            <person name="Kolesov G."/>
            <person name="Mayer K.F.X."/>
            <person name="Rudd S."/>
            <person name="Schoof H."/>
            <person name="Schueller C."/>
            <person name="Zaccaria P."/>
            <person name="Mewes H.-W."/>
            <person name="Bevan M."/>
            <person name="Fransz P.F."/>
        </authorList>
    </citation>
    <scope>NUCLEOTIDE SEQUENCE [LARGE SCALE GENOMIC DNA]</scope>
    <source>
        <strain>cv. Columbia</strain>
    </source>
</reference>
<reference key="3">
    <citation type="journal article" date="2017" name="Plant J.">
        <title>Araport11: a complete reannotation of the Arabidopsis thaliana reference genome.</title>
        <authorList>
            <person name="Cheng C.Y."/>
            <person name="Krishnakumar V."/>
            <person name="Chan A.P."/>
            <person name="Thibaud-Nissen F."/>
            <person name="Schobel S."/>
            <person name="Town C.D."/>
        </authorList>
    </citation>
    <scope>GENOME REANNOTATION</scope>
    <source>
        <strain>cv. Columbia</strain>
    </source>
</reference>
<reference key="4">
    <citation type="journal article" date="2003" name="Science">
        <title>Empirical analysis of transcriptional activity in the Arabidopsis genome.</title>
        <authorList>
            <person name="Yamada K."/>
            <person name="Lim J."/>
            <person name="Dale J.M."/>
            <person name="Chen H."/>
            <person name="Shinn P."/>
            <person name="Palm C.J."/>
            <person name="Southwick A.M."/>
            <person name="Wu H.C."/>
            <person name="Kim C.J."/>
            <person name="Nguyen M."/>
            <person name="Pham P.K."/>
            <person name="Cheuk R.F."/>
            <person name="Karlin-Newmann G."/>
            <person name="Liu S.X."/>
            <person name="Lam B."/>
            <person name="Sakano H."/>
            <person name="Wu T."/>
            <person name="Yu G."/>
            <person name="Miranda M."/>
            <person name="Quach H.L."/>
            <person name="Tripp M."/>
            <person name="Chang C.H."/>
            <person name="Lee J.M."/>
            <person name="Toriumi M.J."/>
            <person name="Chan M.M."/>
            <person name="Tang C.C."/>
            <person name="Onodera C.S."/>
            <person name="Deng J.M."/>
            <person name="Akiyama K."/>
            <person name="Ansari Y."/>
            <person name="Arakawa T."/>
            <person name="Banh J."/>
            <person name="Banno F."/>
            <person name="Bowser L."/>
            <person name="Brooks S.Y."/>
            <person name="Carninci P."/>
            <person name="Chao Q."/>
            <person name="Choy N."/>
            <person name="Enju A."/>
            <person name="Goldsmith A.D."/>
            <person name="Gurjal M."/>
            <person name="Hansen N.F."/>
            <person name="Hayashizaki Y."/>
            <person name="Johnson-Hopson C."/>
            <person name="Hsuan V.W."/>
            <person name="Iida K."/>
            <person name="Karnes M."/>
            <person name="Khan S."/>
            <person name="Koesema E."/>
            <person name="Ishida J."/>
            <person name="Jiang P.X."/>
            <person name="Jones T."/>
            <person name="Kawai J."/>
            <person name="Kamiya A."/>
            <person name="Meyers C."/>
            <person name="Nakajima M."/>
            <person name="Narusaka M."/>
            <person name="Seki M."/>
            <person name="Sakurai T."/>
            <person name="Satou M."/>
            <person name="Tamse R."/>
            <person name="Vaysberg M."/>
            <person name="Wallender E.K."/>
            <person name="Wong C."/>
            <person name="Yamamura Y."/>
            <person name="Yuan S."/>
            <person name="Shinozaki K."/>
            <person name="Davis R.W."/>
            <person name="Theologis A."/>
            <person name="Ecker J.R."/>
        </authorList>
    </citation>
    <scope>NUCLEOTIDE SEQUENCE [LARGE SCALE MRNA] (ISOFORMS 1 AND 2)</scope>
    <source>
        <strain>cv. Columbia</strain>
    </source>
</reference>
<reference key="5">
    <citation type="journal article" date="2009" name="Plant Cell">
        <title>SQUAMOSA promoter binding protein-like7 is a central regulator for copper homeostasis in Arabidopsis.</title>
        <authorList>
            <person name="Yamasaki H."/>
            <person name="Hayashi M."/>
            <person name="Fukazawa M."/>
            <person name="Kobayashi Y."/>
            <person name="Shikanai T."/>
        </authorList>
    </citation>
    <scope>FUNCTION</scope>
</reference>
<reference key="6">
    <citation type="journal article" date="2012" name="Plant Cell">
        <title>Transcriptome sequencing identifies SPL7-regulated copper acquisition genes FRO4/FRO5 and the copper dependence of iron homeostasis in Arabidopsis.</title>
        <authorList>
            <person name="Bernal M."/>
            <person name="Casero D."/>
            <person name="Singh V."/>
            <person name="Wilson G.T."/>
            <person name="Grande A."/>
            <person name="Yang H."/>
            <person name="Dodani S.C."/>
            <person name="Pellegrini M."/>
            <person name="Huijser P."/>
            <person name="Connolly E.L."/>
            <person name="Merchant S.S."/>
            <person name="Kraemer U."/>
        </authorList>
    </citation>
    <scope>FUNCTION</scope>
    <scope>DISRUPTION PHENOTYPE</scope>
</reference>
<reference key="7">
    <citation type="journal article" date="2014" name="BMC Plant Biol.">
        <title>Functional characterisation of Arabidopsis SPL7 conserved protein domains suggests novel regulatory mechanisms in the Cu deficiency response.</title>
        <authorList>
            <person name="Garcia-Molina A."/>
            <person name="Xing S."/>
            <person name="Huijser P."/>
        </authorList>
    </citation>
    <scope>SUBUNIT</scope>
</reference>
<reference key="8">
    <citation type="journal article" date="2014" name="Plant Cell">
        <title>MicroRNA408 is critical for the HY5-SPL7 gene network that mediates the coordinated response to light and copper.</title>
        <authorList>
            <person name="Zhang H."/>
            <person name="Zhao X."/>
            <person name="Li J."/>
            <person name="Cai H."/>
            <person name="Deng X.W."/>
            <person name="Li L."/>
        </authorList>
    </citation>
    <scope>FUNCTION</scope>
    <scope>INTERACTION WITH HY5</scope>
</reference>
<reference key="9">
    <citation type="journal article" date="2014" name="Plant Physiol.">
        <title>A conserved KIN17 curved DNA-binding domain protein assembles with SQUAMOSA PROMOTER-BINDING PROTEIN-LIKE7 to adapt Arabidopsis growth and development to limiting copper availability.</title>
        <authorList>
            <person name="Garcia-Molina A."/>
            <person name="Xing S."/>
            <person name="Huijser P."/>
        </authorList>
    </citation>
    <scope>INTERACTION WITH KIN17</scope>
    <scope>SUBCELLULAR LOCATION</scope>
    <scope>TISSUE SPECIFICITY</scope>
</reference>
<reference key="10">
    <citation type="journal article" date="2015" name="Plant Physiol.">
        <title>MicroRNA857 is involved in the regulation of secondary growth of vascular tissues in Arabidopsis.</title>
        <authorList>
            <person name="Zhao Y."/>
            <person name="Lin S."/>
            <person name="Qiu Z."/>
            <person name="Cao D."/>
            <person name="Wen J."/>
            <person name="Deng X."/>
            <person name="Wang X."/>
            <person name="Lin J."/>
            <person name="Li X."/>
        </authorList>
    </citation>
    <scope>FUNCTION</scope>
</reference>
<reference key="11">
    <citation type="journal article" date="2016" name="BMC Plant Biol.">
        <title>Toxicity responses of Cu and Cd: the involvement of miRNAs and the transcription factor SPL7.</title>
        <authorList>
            <person name="Gielen H."/>
            <person name="Remans T."/>
            <person name="Vangronsveld J."/>
            <person name="Cuypers A."/>
        </authorList>
    </citation>
    <scope>FUNCTION</scope>
</reference>
<reference key="12">
    <citation type="journal article" date="2004" name="J. Mol. Biol.">
        <title>A novel zinc-binding motif revealed by solution structures of DNA-binding domains of Arabidopsis SBP-family transcription factors.</title>
        <authorList>
            <person name="Yamasaki K."/>
            <person name="Kigawa T."/>
            <person name="Inoue M."/>
            <person name="Tateno M."/>
            <person name="Yamasaki T."/>
            <person name="Yabuki T."/>
            <person name="Aoki M."/>
            <person name="Seki E."/>
            <person name="Matsuda T."/>
            <person name="Nunokawa E."/>
            <person name="Ishizuka Y."/>
            <person name="Terada T."/>
            <person name="Shirouzu M."/>
            <person name="Osanai T."/>
            <person name="Tanaka A."/>
            <person name="Seki M."/>
            <person name="Shinozaki K."/>
            <person name="Yokoyama S."/>
        </authorList>
    </citation>
    <scope>STRUCTURE BY NMR OF 135-220</scope>
    <scope>ZINC-BINDING SITES CYS-138; CYS-143; CYS-160; CYS-163; CYS-179; CYS-182; HIS-186 AND CYS-198</scope>
</reference>